<name>MNMA_STAA9</name>
<reference key="1">
    <citation type="submission" date="2007-05" db="EMBL/GenBank/DDBJ databases">
        <title>Complete sequence of chromosome of Staphylococcus aureus subsp. aureus JH9.</title>
        <authorList>
            <consortium name="US DOE Joint Genome Institute"/>
            <person name="Copeland A."/>
            <person name="Lucas S."/>
            <person name="Lapidus A."/>
            <person name="Barry K."/>
            <person name="Detter J.C."/>
            <person name="Glavina del Rio T."/>
            <person name="Hammon N."/>
            <person name="Israni S."/>
            <person name="Pitluck S."/>
            <person name="Chain P."/>
            <person name="Malfatti S."/>
            <person name="Shin M."/>
            <person name="Vergez L."/>
            <person name="Schmutz J."/>
            <person name="Larimer F."/>
            <person name="Land M."/>
            <person name="Hauser L."/>
            <person name="Kyrpides N."/>
            <person name="Kim E."/>
            <person name="Tomasz A."/>
            <person name="Richardson P."/>
        </authorList>
    </citation>
    <scope>NUCLEOTIDE SEQUENCE [LARGE SCALE GENOMIC DNA]</scope>
    <source>
        <strain>JH9</strain>
    </source>
</reference>
<accession>A5ITE6</accession>
<feature type="chain" id="PRO_1000076573" description="tRNA-specific 2-thiouridylase MnmA">
    <location>
        <begin position="1"/>
        <end position="372"/>
    </location>
</feature>
<feature type="region of interest" description="Interaction with target base in tRNA" evidence="1">
    <location>
        <begin position="97"/>
        <end position="99"/>
    </location>
</feature>
<feature type="region of interest" description="Interaction with tRNA" evidence="1">
    <location>
        <begin position="149"/>
        <end position="151"/>
    </location>
</feature>
<feature type="region of interest" description="Interaction with tRNA" evidence="1">
    <location>
        <begin position="309"/>
        <end position="310"/>
    </location>
</feature>
<feature type="active site" description="Nucleophile" evidence="1">
    <location>
        <position position="102"/>
    </location>
</feature>
<feature type="active site" description="Cysteine persulfide intermediate" evidence="1">
    <location>
        <position position="199"/>
    </location>
</feature>
<feature type="binding site" evidence="1">
    <location>
        <begin position="11"/>
        <end position="18"/>
    </location>
    <ligand>
        <name>ATP</name>
        <dbReference type="ChEBI" id="CHEBI:30616"/>
    </ligand>
</feature>
<feature type="binding site" evidence="1">
    <location>
        <position position="37"/>
    </location>
    <ligand>
        <name>ATP</name>
        <dbReference type="ChEBI" id="CHEBI:30616"/>
    </ligand>
</feature>
<feature type="binding site" evidence="1">
    <location>
        <position position="126"/>
    </location>
    <ligand>
        <name>ATP</name>
        <dbReference type="ChEBI" id="CHEBI:30616"/>
    </ligand>
</feature>
<feature type="site" description="Interaction with tRNA" evidence="1">
    <location>
        <position position="127"/>
    </location>
</feature>
<feature type="site" description="Interaction with tRNA" evidence="1">
    <location>
        <position position="342"/>
    </location>
</feature>
<feature type="disulfide bond" description="Alternate" evidence="1">
    <location>
        <begin position="102"/>
        <end position="199"/>
    </location>
</feature>
<organism>
    <name type="scientific">Staphylococcus aureus (strain JH9)</name>
    <dbReference type="NCBI Taxonomy" id="359786"/>
    <lineage>
        <taxon>Bacteria</taxon>
        <taxon>Bacillati</taxon>
        <taxon>Bacillota</taxon>
        <taxon>Bacilli</taxon>
        <taxon>Bacillales</taxon>
        <taxon>Staphylococcaceae</taxon>
        <taxon>Staphylococcus</taxon>
    </lineage>
</organism>
<comment type="function">
    <text evidence="1">Catalyzes the 2-thiolation of uridine at the wobble position (U34) of tRNA, leading to the formation of s(2)U34.</text>
</comment>
<comment type="catalytic activity">
    <reaction evidence="1">
        <text>S-sulfanyl-L-cysteinyl-[protein] + uridine(34) in tRNA + AH2 + ATP = 2-thiouridine(34) in tRNA + L-cysteinyl-[protein] + A + AMP + diphosphate + H(+)</text>
        <dbReference type="Rhea" id="RHEA:47032"/>
        <dbReference type="Rhea" id="RHEA-COMP:10131"/>
        <dbReference type="Rhea" id="RHEA-COMP:11726"/>
        <dbReference type="Rhea" id="RHEA-COMP:11727"/>
        <dbReference type="Rhea" id="RHEA-COMP:11728"/>
        <dbReference type="ChEBI" id="CHEBI:13193"/>
        <dbReference type="ChEBI" id="CHEBI:15378"/>
        <dbReference type="ChEBI" id="CHEBI:17499"/>
        <dbReference type="ChEBI" id="CHEBI:29950"/>
        <dbReference type="ChEBI" id="CHEBI:30616"/>
        <dbReference type="ChEBI" id="CHEBI:33019"/>
        <dbReference type="ChEBI" id="CHEBI:61963"/>
        <dbReference type="ChEBI" id="CHEBI:65315"/>
        <dbReference type="ChEBI" id="CHEBI:87170"/>
        <dbReference type="ChEBI" id="CHEBI:456215"/>
        <dbReference type="EC" id="2.8.1.13"/>
    </reaction>
</comment>
<comment type="subcellular location">
    <subcellularLocation>
        <location evidence="1">Cytoplasm</location>
    </subcellularLocation>
</comment>
<comment type="similarity">
    <text evidence="1">Belongs to the MnmA/TRMU family.</text>
</comment>
<evidence type="ECO:0000255" key="1">
    <source>
        <dbReference type="HAMAP-Rule" id="MF_00144"/>
    </source>
</evidence>
<keyword id="KW-0067">ATP-binding</keyword>
<keyword id="KW-0963">Cytoplasm</keyword>
<keyword id="KW-1015">Disulfide bond</keyword>
<keyword id="KW-0547">Nucleotide-binding</keyword>
<keyword id="KW-0694">RNA-binding</keyword>
<keyword id="KW-0808">Transferase</keyword>
<keyword id="KW-0819">tRNA processing</keyword>
<keyword id="KW-0820">tRNA-binding</keyword>
<proteinExistence type="inferred from homology"/>
<dbReference type="EC" id="2.8.1.13" evidence="1"/>
<dbReference type="EMBL" id="CP000703">
    <property type="protein sequence ID" value="ABQ49469.1"/>
    <property type="molecule type" value="Genomic_DNA"/>
</dbReference>
<dbReference type="RefSeq" id="WP_000066097.1">
    <property type="nucleotide sequence ID" value="NC_009487.1"/>
</dbReference>
<dbReference type="SMR" id="A5ITE6"/>
<dbReference type="KEGG" id="saj:SaurJH9_1679"/>
<dbReference type="HOGENOM" id="CLU_035188_1_0_9"/>
<dbReference type="GO" id="GO:0005737">
    <property type="term" value="C:cytoplasm"/>
    <property type="evidence" value="ECO:0007669"/>
    <property type="project" value="UniProtKB-SubCell"/>
</dbReference>
<dbReference type="GO" id="GO:0005524">
    <property type="term" value="F:ATP binding"/>
    <property type="evidence" value="ECO:0007669"/>
    <property type="project" value="UniProtKB-KW"/>
</dbReference>
<dbReference type="GO" id="GO:0000049">
    <property type="term" value="F:tRNA binding"/>
    <property type="evidence" value="ECO:0007669"/>
    <property type="project" value="UniProtKB-KW"/>
</dbReference>
<dbReference type="GO" id="GO:0103016">
    <property type="term" value="F:tRNA-uridine 2-sulfurtransferase activity"/>
    <property type="evidence" value="ECO:0007669"/>
    <property type="project" value="UniProtKB-EC"/>
</dbReference>
<dbReference type="GO" id="GO:0002143">
    <property type="term" value="P:tRNA wobble position uridine thiolation"/>
    <property type="evidence" value="ECO:0007669"/>
    <property type="project" value="TreeGrafter"/>
</dbReference>
<dbReference type="CDD" id="cd01998">
    <property type="entry name" value="MnmA_TRMU-like"/>
    <property type="match status" value="1"/>
</dbReference>
<dbReference type="FunFam" id="2.30.30.280:FF:000001">
    <property type="entry name" value="tRNA-specific 2-thiouridylase MnmA"/>
    <property type="match status" value="1"/>
</dbReference>
<dbReference type="FunFam" id="2.40.30.10:FF:000023">
    <property type="entry name" value="tRNA-specific 2-thiouridylase MnmA"/>
    <property type="match status" value="1"/>
</dbReference>
<dbReference type="FunFam" id="3.40.50.620:FF:000004">
    <property type="entry name" value="tRNA-specific 2-thiouridylase MnmA"/>
    <property type="match status" value="1"/>
</dbReference>
<dbReference type="Gene3D" id="2.30.30.280">
    <property type="entry name" value="Adenine nucleotide alpha hydrolases-like domains"/>
    <property type="match status" value="1"/>
</dbReference>
<dbReference type="Gene3D" id="3.40.50.620">
    <property type="entry name" value="HUPs"/>
    <property type="match status" value="1"/>
</dbReference>
<dbReference type="Gene3D" id="2.40.30.10">
    <property type="entry name" value="Translation factors"/>
    <property type="match status" value="1"/>
</dbReference>
<dbReference type="HAMAP" id="MF_00144">
    <property type="entry name" value="tRNA_thiouridyl_MnmA"/>
    <property type="match status" value="1"/>
</dbReference>
<dbReference type="InterPro" id="IPR004506">
    <property type="entry name" value="MnmA-like"/>
</dbReference>
<dbReference type="InterPro" id="IPR046885">
    <property type="entry name" value="MnmA-like_C"/>
</dbReference>
<dbReference type="InterPro" id="IPR046884">
    <property type="entry name" value="MnmA-like_central"/>
</dbReference>
<dbReference type="InterPro" id="IPR023382">
    <property type="entry name" value="MnmA-like_central_sf"/>
</dbReference>
<dbReference type="InterPro" id="IPR014729">
    <property type="entry name" value="Rossmann-like_a/b/a_fold"/>
</dbReference>
<dbReference type="NCBIfam" id="NF001138">
    <property type="entry name" value="PRK00143.1"/>
    <property type="match status" value="1"/>
</dbReference>
<dbReference type="NCBIfam" id="TIGR00420">
    <property type="entry name" value="trmU"/>
    <property type="match status" value="1"/>
</dbReference>
<dbReference type="PANTHER" id="PTHR11933:SF5">
    <property type="entry name" value="MITOCHONDRIAL TRNA-SPECIFIC 2-THIOURIDYLASE 1"/>
    <property type="match status" value="1"/>
</dbReference>
<dbReference type="PANTHER" id="PTHR11933">
    <property type="entry name" value="TRNA 5-METHYLAMINOMETHYL-2-THIOURIDYLATE -METHYLTRANSFERASE"/>
    <property type="match status" value="1"/>
</dbReference>
<dbReference type="Pfam" id="PF03054">
    <property type="entry name" value="tRNA_Me_trans"/>
    <property type="match status" value="1"/>
</dbReference>
<dbReference type="Pfam" id="PF20258">
    <property type="entry name" value="tRNA_Me_trans_C"/>
    <property type="match status" value="1"/>
</dbReference>
<dbReference type="Pfam" id="PF20259">
    <property type="entry name" value="tRNA_Me_trans_M"/>
    <property type="match status" value="1"/>
</dbReference>
<dbReference type="SUPFAM" id="SSF52402">
    <property type="entry name" value="Adenine nucleotide alpha hydrolases-like"/>
    <property type="match status" value="1"/>
</dbReference>
<sequence length="372" mass="42150">MSNKDIRVVVGMSGGVDSSVTAHVLKEQGYDVIGIFMKNWDDTDENGVCTATEDYNDVIEVCNQIGIPYYAVNFEKEYWDKVFTYFLDEYKKGRTPNPDVMCNKEIKFKAFLDHAMNLGADYVATGHYARIHRHEDGHVEMLRGVDNNKDQTYFLNQLSQQQLSKVMFPIGDIEKSEVRRIAEEQGLVTAKKKDSTGICFIGEKNFKTFLSQYLPAQPGDMITLDGKKMGKHSGLMYYTIGQRHGLGIGGDGDPWFVVGKNLKDNVLYVEQGFHHDALYSDYLIASDYSFVNPEDNDLDQGFECTAKFRYRQKDTKVFVKRENDHALRVTFAEPVRAITPGQAVVFYQGDVCLGGATIDDVFKNEGQLNYVV</sequence>
<gene>
    <name evidence="1" type="primary">mnmA</name>
    <name type="synonym">trmU</name>
    <name type="ordered locus">SaurJH9_1679</name>
</gene>
<protein>
    <recommendedName>
        <fullName evidence="1">tRNA-specific 2-thiouridylase MnmA</fullName>
        <ecNumber evidence="1">2.8.1.13</ecNumber>
    </recommendedName>
</protein>